<gene>
    <name evidence="1" type="primary">atpC</name>
    <name type="ordered locus">OE_3987R</name>
</gene>
<feature type="chain" id="PRO_1000115712" description="A-type ATP synthase subunit C">
    <location>
        <begin position="1"/>
        <end position="352"/>
    </location>
</feature>
<comment type="function">
    <text evidence="1">Component of the A-type ATP synthase that produces ATP from ADP in the presence of a proton gradient across the membrane.</text>
</comment>
<comment type="subunit">
    <text evidence="1">Has multiple subunits with at least A(3), B(3), C, D, E, F, H, I and proteolipid K(x).</text>
</comment>
<comment type="subcellular location">
    <subcellularLocation>
        <location evidence="1">Cell membrane</location>
        <topology evidence="1">Peripheral membrane protein</topology>
    </subcellularLocation>
</comment>
<comment type="similarity">
    <text evidence="1">Belongs to the V-ATPase V0D/AC39 subunit family.</text>
</comment>
<keyword id="KW-0066">ATP synthesis</keyword>
<keyword id="KW-1003">Cell membrane</keyword>
<keyword id="KW-0375">Hydrogen ion transport</keyword>
<keyword id="KW-0406">Ion transport</keyword>
<keyword id="KW-0472">Membrane</keyword>
<keyword id="KW-0813">Transport</keyword>
<proteinExistence type="inferred from homology"/>
<evidence type="ECO:0000255" key="1">
    <source>
        <dbReference type="HAMAP-Rule" id="MF_00314"/>
    </source>
</evidence>
<organism>
    <name type="scientific">Halobacterium salinarum (strain ATCC 29341 / DSM 671 / R1)</name>
    <dbReference type="NCBI Taxonomy" id="478009"/>
    <lineage>
        <taxon>Archaea</taxon>
        <taxon>Methanobacteriati</taxon>
        <taxon>Methanobacteriota</taxon>
        <taxon>Stenosarchaea group</taxon>
        <taxon>Halobacteria</taxon>
        <taxon>Halobacteriales</taxon>
        <taxon>Halobacteriaceae</taxon>
        <taxon>Halobacterium</taxon>
        <taxon>Halobacterium salinarum NRC-34001</taxon>
    </lineage>
</organism>
<protein>
    <recommendedName>
        <fullName evidence="1">A-type ATP synthase subunit C</fullName>
    </recommendedName>
</protein>
<sequence>MSASGPANYEYVVARIRHRRAGLFGDDEYRKLLRMGTGEIARFMEDSTYKDAVDSLASRHRGMDLVEYALNEGLAAEFDALLSWSEGRLYDQLAKYLRKFDAWNVKTVFRGLYSHADTDAIRADLVDAGEFDAAFLDELLSADSVETVVDALSGTIFDTYLEPAFADYEDEDSLVPLENAVDRAYYENLNPSQPATAAQDSPEALYAEFLTAEIDFRNARNALRLARSGVSVDPAAYFIEGGTLFEASEMTTLVERQSDLVSRIQDSTYGDELSTALTALEESDSLIGFEHALDRALLSYSDHLSYVYPTSVCPVLAYVLAKEREVDNIRAIARGREAGMSEDEIQAELVML</sequence>
<name>AATC_HALS3</name>
<reference key="1">
    <citation type="journal article" date="2008" name="Genomics">
        <title>Evolution in the laboratory: the genome of Halobacterium salinarum strain R1 compared to that of strain NRC-1.</title>
        <authorList>
            <person name="Pfeiffer F."/>
            <person name="Schuster S.C."/>
            <person name="Broicher A."/>
            <person name="Falb M."/>
            <person name="Palm P."/>
            <person name="Rodewald K."/>
            <person name="Ruepp A."/>
            <person name="Soppa J."/>
            <person name="Tittor J."/>
            <person name="Oesterhelt D."/>
        </authorList>
    </citation>
    <scope>NUCLEOTIDE SEQUENCE [LARGE SCALE GENOMIC DNA]</scope>
    <source>
        <strain>ATCC 29341 / DSM 671 / R1</strain>
    </source>
</reference>
<dbReference type="EMBL" id="AM774415">
    <property type="protein sequence ID" value="CAP14576.1"/>
    <property type="molecule type" value="Genomic_DNA"/>
</dbReference>
<dbReference type="RefSeq" id="WP_010903581.1">
    <property type="nucleotide sequence ID" value="NC_010364.1"/>
</dbReference>
<dbReference type="SMR" id="B0R757"/>
<dbReference type="EnsemblBacteria" id="CAP14576">
    <property type="protein sequence ID" value="CAP14576"/>
    <property type="gene ID" value="OE_3987R"/>
</dbReference>
<dbReference type="KEGG" id="hsl:OE_3987R"/>
<dbReference type="HOGENOM" id="CLU_059311_0_1_2"/>
<dbReference type="PhylomeDB" id="B0R757"/>
<dbReference type="Proteomes" id="UP000001321">
    <property type="component" value="Chromosome"/>
</dbReference>
<dbReference type="GO" id="GO:0005886">
    <property type="term" value="C:plasma membrane"/>
    <property type="evidence" value="ECO:0007669"/>
    <property type="project" value="UniProtKB-SubCell"/>
</dbReference>
<dbReference type="GO" id="GO:0033179">
    <property type="term" value="C:proton-transporting V-type ATPase, V0 domain"/>
    <property type="evidence" value="ECO:0007669"/>
    <property type="project" value="InterPro"/>
</dbReference>
<dbReference type="GO" id="GO:0005524">
    <property type="term" value="F:ATP binding"/>
    <property type="evidence" value="ECO:0007669"/>
    <property type="project" value="UniProtKB-UniRule"/>
</dbReference>
<dbReference type="GO" id="GO:0046933">
    <property type="term" value="F:proton-transporting ATP synthase activity, rotational mechanism"/>
    <property type="evidence" value="ECO:0007669"/>
    <property type="project" value="UniProtKB-UniRule"/>
</dbReference>
<dbReference type="GO" id="GO:0046961">
    <property type="term" value="F:proton-transporting ATPase activity, rotational mechanism"/>
    <property type="evidence" value="ECO:0007669"/>
    <property type="project" value="InterPro"/>
</dbReference>
<dbReference type="GO" id="GO:0042777">
    <property type="term" value="P:proton motive force-driven plasma membrane ATP synthesis"/>
    <property type="evidence" value="ECO:0007669"/>
    <property type="project" value="UniProtKB-UniRule"/>
</dbReference>
<dbReference type="Gene3D" id="1.10.132.50">
    <property type="entry name" value="ATP synthase (C/AC39) subunit, domain 3"/>
    <property type="match status" value="1"/>
</dbReference>
<dbReference type="Gene3D" id="1.20.1690.10">
    <property type="entry name" value="V-type ATP synthase subunit C domain"/>
    <property type="match status" value="2"/>
</dbReference>
<dbReference type="HAMAP" id="MF_00314">
    <property type="entry name" value="ATP_synth_C_arch"/>
    <property type="match status" value="1"/>
</dbReference>
<dbReference type="InterPro" id="IPR036079">
    <property type="entry name" value="ATPase_csu/dsu_sf"/>
</dbReference>
<dbReference type="InterPro" id="IPR014272">
    <property type="entry name" value="ATPase_V0-cplx_csu"/>
</dbReference>
<dbReference type="InterPro" id="IPR002843">
    <property type="entry name" value="ATPase_V0-cplx_csu/dsu"/>
</dbReference>
<dbReference type="InterPro" id="IPR050873">
    <property type="entry name" value="V-ATPase_V0D/AC39_subunit"/>
</dbReference>
<dbReference type="InterPro" id="IPR035067">
    <property type="entry name" value="V-type_ATPase_csu/dsu"/>
</dbReference>
<dbReference type="InterPro" id="IPR044911">
    <property type="entry name" value="V-type_ATPase_csu/dsu_dom_3"/>
</dbReference>
<dbReference type="NCBIfam" id="TIGR02923">
    <property type="entry name" value="AhaC"/>
    <property type="match status" value="1"/>
</dbReference>
<dbReference type="NCBIfam" id="NF002265">
    <property type="entry name" value="PRK01198.1-1"/>
    <property type="match status" value="1"/>
</dbReference>
<dbReference type="PANTHER" id="PTHR38682">
    <property type="entry name" value="V-TYPE ATP SYNTHASE SUBUNIT C"/>
    <property type="match status" value="1"/>
</dbReference>
<dbReference type="PANTHER" id="PTHR38682:SF1">
    <property type="entry name" value="V-TYPE ATP SYNTHASE SUBUNIT C"/>
    <property type="match status" value="1"/>
</dbReference>
<dbReference type="Pfam" id="PF01992">
    <property type="entry name" value="vATP-synt_AC39"/>
    <property type="match status" value="1"/>
</dbReference>
<dbReference type="SUPFAM" id="SSF103486">
    <property type="entry name" value="V-type ATP synthase subunit C"/>
    <property type="match status" value="1"/>
</dbReference>
<accession>B0R757</accession>